<comment type="function">
    <text evidence="1">Catalyzes the formation of cyclic 2,3-diphosphoglycerate (cDPG) by formation of an intramolecular phosphoanhydride bond at the expense of ATP.</text>
</comment>
<comment type="catalytic activity">
    <reaction evidence="1">
        <text>(2R)-2,3-bisphosphoglycerate + ATP + H(+) = cyclic (2R)-2,3-bisphosphoglycerate + ADP + phosphate</text>
        <dbReference type="Rhea" id="RHEA:42412"/>
        <dbReference type="ChEBI" id="CHEBI:15378"/>
        <dbReference type="ChEBI" id="CHEBI:30616"/>
        <dbReference type="ChEBI" id="CHEBI:43474"/>
        <dbReference type="ChEBI" id="CHEBI:58248"/>
        <dbReference type="ChEBI" id="CHEBI:79081"/>
        <dbReference type="ChEBI" id="CHEBI:456216"/>
        <dbReference type="EC" id="6.5.1.9"/>
    </reaction>
</comment>
<comment type="subcellular location">
    <subcellularLocation>
        <location evidence="1">Cytoplasm</location>
    </subcellularLocation>
</comment>
<comment type="similarity">
    <text evidence="1">Belongs to the cyclic 2,3-diphosphoglycerate synthetase family.</text>
</comment>
<sequence length="461" mass="51303">MKSKNSMSVLCLVDGEHYFPVTKSAVDKIESKGYDVKLLLFIGGTEKLRDTNVDIISEMFNKPVLFGQDHSKVPYDLIEESIKEYDVGMVVDLSDEPVVNYSIRFNIATIALLNGCMYKGSDFEFKALEEEDVLNNPSYKIIGTGKRIGKTAVSAYTARLINKDSDFVPCVVAMGRGGPQIPEIVRGDKIHLTPKYLMEKSDKGFHAASDHWEDALMSRVLTVGCRRCAGGMAGMVYETNMVEGAMMTNDLDVNLVALEGSGSAIPPVKADKQIVLVGGHQPMETLTEYFGPYRIKLADLIIITMCDEQICSREKLDDLLIKIHEINPNADIVPTIFRPHPVDDISNKNILFATTAPESVQHLLKDYLEENFNCNVVAISSHLSNRPLLQRDIEENIDNIDCMLTELKAAAVDVATKDALNKGLEVVYCDNIPIAINDEYDLDKSIMNIVYEAKESFNKKD</sequence>
<gene>
    <name evidence="1" type="primary">cpgS</name>
    <name type="ordered locus">Msp_0129</name>
</gene>
<dbReference type="EC" id="6.5.1.9" evidence="1"/>
<dbReference type="EMBL" id="CP000102">
    <property type="protein sequence ID" value="ABC56547.1"/>
    <property type="molecule type" value="Genomic_DNA"/>
</dbReference>
<dbReference type="SMR" id="Q2NHT6"/>
<dbReference type="KEGG" id="mst:Msp_0129"/>
<dbReference type="eggNOG" id="arCOG01230">
    <property type="taxonomic scope" value="Archaea"/>
</dbReference>
<dbReference type="HOGENOM" id="CLU_638764_0_0_2"/>
<dbReference type="Proteomes" id="UP000001931">
    <property type="component" value="Chromosome"/>
</dbReference>
<dbReference type="GO" id="GO:0005737">
    <property type="term" value="C:cytoplasm"/>
    <property type="evidence" value="ECO:0007669"/>
    <property type="project" value="UniProtKB-SubCell"/>
</dbReference>
<dbReference type="GO" id="GO:0005524">
    <property type="term" value="F:ATP binding"/>
    <property type="evidence" value="ECO:0007669"/>
    <property type="project" value="UniProtKB-KW"/>
</dbReference>
<dbReference type="GO" id="GO:0036356">
    <property type="term" value="F:cyclic 2,3-diphosphoglycerate synthetase activity"/>
    <property type="evidence" value="ECO:0007669"/>
    <property type="project" value="InterPro"/>
</dbReference>
<dbReference type="GO" id="GO:0016874">
    <property type="term" value="F:ligase activity"/>
    <property type="evidence" value="ECO:0007669"/>
    <property type="project" value="UniProtKB-UniRule"/>
</dbReference>
<dbReference type="GO" id="GO:0006094">
    <property type="term" value="P:gluconeogenesis"/>
    <property type="evidence" value="ECO:0007669"/>
    <property type="project" value="InterPro"/>
</dbReference>
<dbReference type="HAMAP" id="MF_01908">
    <property type="entry name" value="Cyc_PG_syn"/>
    <property type="match status" value="1"/>
</dbReference>
<dbReference type="InterPro" id="IPR016557">
    <property type="entry name" value="Cyc_diphosphoglycerate_synth"/>
</dbReference>
<dbReference type="PIRSF" id="PIRSF009445">
    <property type="entry name" value="Cyc_PG_syn"/>
    <property type="match status" value="1"/>
</dbReference>
<protein>
    <recommendedName>
        <fullName evidence="1">Cyclic 2,3-diphosphoglycerate synthetase</fullName>
        <shortName evidence="1">cDPGS</shortName>
        <ecNumber evidence="1">6.5.1.9</ecNumber>
    </recommendedName>
</protein>
<proteinExistence type="inferred from homology"/>
<keyword id="KW-0067">ATP-binding</keyword>
<keyword id="KW-0963">Cytoplasm</keyword>
<keyword id="KW-0436">Ligase</keyword>
<keyword id="KW-0547">Nucleotide-binding</keyword>
<keyword id="KW-1185">Reference proteome</keyword>
<reference key="1">
    <citation type="journal article" date="2006" name="J. Bacteriol.">
        <title>The genome sequence of Methanosphaera stadtmanae reveals why this human intestinal archaeon is restricted to methanol and H2 for methane formation and ATP synthesis.</title>
        <authorList>
            <person name="Fricke W.F."/>
            <person name="Seedorf H."/>
            <person name="Henne A."/>
            <person name="Kruer M."/>
            <person name="Liesegang H."/>
            <person name="Hedderich R."/>
            <person name="Gottschalk G."/>
            <person name="Thauer R.K."/>
        </authorList>
    </citation>
    <scope>NUCLEOTIDE SEQUENCE [LARGE SCALE GENOMIC DNA]</scope>
    <source>
        <strain>ATCC 43021 / DSM 3091 / JCM 11832 / MCB-3</strain>
    </source>
</reference>
<evidence type="ECO:0000255" key="1">
    <source>
        <dbReference type="HAMAP-Rule" id="MF_01908"/>
    </source>
</evidence>
<accession>Q2NHT6</accession>
<organism>
    <name type="scientific">Methanosphaera stadtmanae (strain ATCC 43021 / DSM 3091 / JCM 11832 / MCB-3)</name>
    <dbReference type="NCBI Taxonomy" id="339860"/>
    <lineage>
        <taxon>Archaea</taxon>
        <taxon>Methanobacteriati</taxon>
        <taxon>Methanobacteriota</taxon>
        <taxon>Methanomada group</taxon>
        <taxon>Methanobacteria</taxon>
        <taxon>Methanobacteriales</taxon>
        <taxon>Methanobacteriaceae</taxon>
        <taxon>Methanosphaera</taxon>
    </lineage>
</organism>
<feature type="chain" id="PRO_0000313692" description="Cyclic 2,3-diphosphoglycerate synthetase">
    <location>
        <begin position="1"/>
        <end position="461"/>
    </location>
</feature>
<name>CPGS_METST</name>